<evidence type="ECO:0000250" key="1"/>
<evidence type="ECO:0000269" key="2">
    <source>
    </source>
</evidence>
<evidence type="ECO:0000305" key="3"/>
<dbReference type="EMBL" id="L29636">
    <property type="protein sequence ID" value="AAA26814.1"/>
    <property type="molecule type" value="Genomic_DNA"/>
</dbReference>
<dbReference type="EMBL" id="AJ131213">
    <property type="protein sequence ID" value="CAA10323.1"/>
    <property type="molecule type" value="Genomic_DNA"/>
</dbReference>
<dbReference type="EMBL" id="AL939116">
    <property type="protein sequence ID" value="CAB40856.1"/>
    <property type="molecule type" value="Genomic_DNA"/>
</dbReference>
<dbReference type="PIR" id="T36367">
    <property type="entry name" value="T36367"/>
</dbReference>
<dbReference type="RefSeq" id="NP_627564.1">
    <property type="nucleotide sequence ID" value="NC_003888.3"/>
</dbReference>
<dbReference type="RefSeq" id="WP_003975479.1">
    <property type="nucleotide sequence ID" value="NZ_VNID01000023.1"/>
</dbReference>
<dbReference type="SMR" id="P38133"/>
<dbReference type="STRING" id="100226.gene:17760978"/>
<dbReference type="PaxDb" id="100226-SCO3356"/>
<dbReference type="KEGG" id="sco:SCO3356"/>
<dbReference type="PATRIC" id="fig|100226.15.peg.3418"/>
<dbReference type="eggNOG" id="COG1595">
    <property type="taxonomic scope" value="Bacteria"/>
</dbReference>
<dbReference type="HOGENOM" id="CLU_047691_15_4_11"/>
<dbReference type="InParanoid" id="P38133"/>
<dbReference type="OrthoDB" id="3686693at2"/>
<dbReference type="PhylomeDB" id="P38133"/>
<dbReference type="Proteomes" id="UP000001973">
    <property type="component" value="Chromosome"/>
</dbReference>
<dbReference type="GO" id="GO:0005737">
    <property type="term" value="C:cytoplasm"/>
    <property type="evidence" value="ECO:0007669"/>
    <property type="project" value="UniProtKB-SubCell"/>
</dbReference>
<dbReference type="GO" id="GO:0003677">
    <property type="term" value="F:DNA binding"/>
    <property type="evidence" value="ECO:0007669"/>
    <property type="project" value="UniProtKB-KW"/>
</dbReference>
<dbReference type="GO" id="GO:0016987">
    <property type="term" value="F:sigma factor activity"/>
    <property type="evidence" value="ECO:0000318"/>
    <property type="project" value="GO_Central"/>
</dbReference>
<dbReference type="GO" id="GO:0006352">
    <property type="term" value="P:DNA-templated transcription initiation"/>
    <property type="evidence" value="ECO:0007669"/>
    <property type="project" value="InterPro"/>
</dbReference>
<dbReference type="GO" id="GO:0006355">
    <property type="term" value="P:regulation of DNA-templated transcription"/>
    <property type="evidence" value="ECO:0000318"/>
    <property type="project" value="GO_Central"/>
</dbReference>
<dbReference type="GO" id="GO:0006950">
    <property type="term" value="P:response to stress"/>
    <property type="evidence" value="ECO:0007669"/>
    <property type="project" value="UniProtKB-ARBA"/>
</dbReference>
<dbReference type="CDD" id="cd06171">
    <property type="entry name" value="Sigma70_r4"/>
    <property type="match status" value="1"/>
</dbReference>
<dbReference type="Gene3D" id="1.10.1740.10">
    <property type="match status" value="1"/>
</dbReference>
<dbReference type="Gene3D" id="1.10.10.10">
    <property type="entry name" value="Winged helix-like DNA-binding domain superfamily/Winged helix DNA-binding domain"/>
    <property type="match status" value="1"/>
</dbReference>
<dbReference type="InterPro" id="IPR039425">
    <property type="entry name" value="RNA_pol_sigma-70-like"/>
</dbReference>
<dbReference type="InterPro" id="IPR014284">
    <property type="entry name" value="RNA_pol_sigma-70_dom"/>
</dbReference>
<dbReference type="InterPro" id="IPR014325">
    <property type="entry name" value="RNA_pol_sigma-E_actinobac"/>
</dbReference>
<dbReference type="InterPro" id="IPR000838">
    <property type="entry name" value="RNA_pol_sigma70_ECF_CS"/>
</dbReference>
<dbReference type="InterPro" id="IPR007627">
    <property type="entry name" value="RNA_pol_sigma70_r2"/>
</dbReference>
<dbReference type="InterPro" id="IPR013249">
    <property type="entry name" value="RNA_pol_sigma70_r4_t2"/>
</dbReference>
<dbReference type="InterPro" id="IPR013325">
    <property type="entry name" value="RNA_pol_sigma_r2"/>
</dbReference>
<dbReference type="InterPro" id="IPR013324">
    <property type="entry name" value="RNA_pol_sigma_r3/r4-like"/>
</dbReference>
<dbReference type="InterPro" id="IPR036388">
    <property type="entry name" value="WH-like_DNA-bd_sf"/>
</dbReference>
<dbReference type="NCBIfam" id="TIGR02983">
    <property type="entry name" value="SigE-fam_strep"/>
    <property type="match status" value="1"/>
</dbReference>
<dbReference type="NCBIfam" id="TIGR02937">
    <property type="entry name" value="sigma70-ECF"/>
    <property type="match status" value="1"/>
</dbReference>
<dbReference type="PANTHER" id="PTHR43133:SF50">
    <property type="entry name" value="ECF RNA POLYMERASE SIGMA FACTOR SIGM"/>
    <property type="match status" value="1"/>
</dbReference>
<dbReference type="PANTHER" id="PTHR43133">
    <property type="entry name" value="RNA POLYMERASE ECF-TYPE SIGMA FACTO"/>
    <property type="match status" value="1"/>
</dbReference>
<dbReference type="Pfam" id="PF04542">
    <property type="entry name" value="Sigma70_r2"/>
    <property type="match status" value="1"/>
</dbReference>
<dbReference type="Pfam" id="PF08281">
    <property type="entry name" value="Sigma70_r4_2"/>
    <property type="match status" value="1"/>
</dbReference>
<dbReference type="SUPFAM" id="SSF88946">
    <property type="entry name" value="Sigma2 domain of RNA polymerase sigma factors"/>
    <property type="match status" value="1"/>
</dbReference>
<dbReference type="SUPFAM" id="SSF88659">
    <property type="entry name" value="Sigma3 and sigma4 domains of RNA polymerase sigma factors"/>
    <property type="match status" value="1"/>
</dbReference>
<dbReference type="PROSITE" id="PS01063">
    <property type="entry name" value="SIGMA70_ECF"/>
    <property type="match status" value="1"/>
</dbReference>
<reference key="1">
    <citation type="journal article" date="1994" name="Proc. Natl. Acad. Sci. U.S.A.">
        <title>Analysis of the Streptomyces coelicolor sigE gene reveals the existence of a subfamily of eubacterial RNA polymerase sigma factors involved in the regulation of extracytoplasmic functions.</title>
        <authorList>
            <person name="Lonetto M.A."/>
            <person name="Brown K.L."/>
            <person name="Rudd K.E."/>
            <person name="Buttner M.J."/>
        </authorList>
    </citation>
    <scope>NUCLEOTIDE SEQUENCE [GENOMIC DNA]</scope>
    <scope>PROTEIN SEQUENCE OF 2-28</scope>
    <source>
        <strain>A3(2) / NRRL B-16638</strain>
    </source>
</reference>
<reference key="2">
    <citation type="journal article" date="1999" name="Mol. Microbiol.">
        <title>A putative two-component signal transduction system regulates sigE, a sigma factor required for normal cell wall integrity in Streptomyces coelicolor A3(2).</title>
        <authorList>
            <person name="Paget M.S.B."/>
            <person name="Leibowitz E."/>
            <person name="Buttner M.J."/>
        </authorList>
    </citation>
    <scope>NUCLEOTIDE SEQUENCE [GENOMIC DNA]</scope>
    <source>
        <strain>A3(2) / NRRL B-16638</strain>
    </source>
</reference>
<reference key="3">
    <citation type="journal article" date="2002" name="Nature">
        <title>Complete genome sequence of the model actinomycete Streptomyces coelicolor A3(2).</title>
        <authorList>
            <person name="Bentley S.D."/>
            <person name="Chater K.F."/>
            <person name="Cerdeno-Tarraga A.-M."/>
            <person name="Challis G.L."/>
            <person name="Thomson N.R."/>
            <person name="James K.D."/>
            <person name="Harris D.E."/>
            <person name="Quail M.A."/>
            <person name="Kieser H."/>
            <person name="Harper D."/>
            <person name="Bateman A."/>
            <person name="Brown S."/>
            <person name="Chandra G."/>
            <person name="Chen C.W."/>
            <person name="Collins M."/>
            <person name="Cronin A."/>
            <person name="Fraser A."/>
            <person name="Goble A."/>
            <person name="Hidalgo J."/>
            <person name="Hornsby T."/>
            <person name="Howarth S."/>
            <person name="Huang C.-H."/>
            <person name="Kieser T."/>
            <person name="Larke L."/>
            <person name="Murphy L.D."/>
            <person name="Oliver K."/>
            <person name="O'Neil S."/>
            <person name="Rabbinowitsch E."/>
            <person name="Rajandream M.A."/>
            <person name="Rutherford K.M."/>
            <person name="Rutter S."/>
            <person name="Seeger K."/>
            <person name="Saunders D."/>
            <person name="Sharp S."/>
            <person name="Squares R."/>
            <person name="Squares S."/>
            <person name="Taylor K."/>
            <person name="Warren T."/>
            <person name="Wietzorrek A."/>
            <person name="Woodward J.R."/>
            <person name="Barrell B.G."/>
            <person name="Parkhill J."/>
            <person name="Hopwood D.A."/>
        </authorList>
    </citation>
    <scope>NUCLEOTIDE SEQUENCE [LARGE SCALE GENOMIC DNA]</scope>
    <source>
        <strain>ATCC BAA-471 / A3(2) / M145</strain>
    </source>
</reference>
<reference key="4">
    <citation type="journal article" date="2006" name="J. Bacteriol.">
        <title>The sigma(E) cell envelope stress response of Streptomyces coelicolor is influenced by a novel lipoprotein, CseA.</title>
        <authorList>
            <person name="Hutchings M.I."/>
            <person name="Hong H.J."/>
            <person name="Leibovitz E."/>
            <person name="Sutcliffe I.C."/>
            <person name="Buttner M.J."/>
        </authorList>
    </citation>
    <scope>INVOLVEMENT IN MAINTENANCE OF CELL WALL INTEGRITY</scope>
    <source>
        <strain>A3(2) / M600</strain>
    </source>
</reference>
<keyword id="KW-0963">Cytoplasm</keyword>
<keyword id="KW-0903">Direct protein sequencing</keyword>
<keyword id="KW-0238">DNA-binding</keyword>
<keyword id="KW-1185">Reference proteome</keyword>
<keyword id="KW-0731">Sigma factor</keyword>
<keyword id="KW-0804">Transcription</keyword>
<keyword id="KW-0805">Transcription regulation</keyword>
<gene>
    <name type="primary">sigE</name>
    <name type="ordered locus">SCO3356</name>
    <name type="ORF">SCE94.07</name>
</gene>
<comment type="function">
    <text>Sigma factors are initiation factors that promote the attachment of RNA polymerase to specific initiation sites and are then released. This sigma factor is required for normal cell wall integrity; it is recruited by RNA polymerase to transcribe genes with cell wall-related functions. It is also involved in the transcription of the dagA gene coding for an extracellular agar-degrading enzyme.</text>
</comment>
<comment type="subcellular location">
    <subcellularLocation>
        <location evidence="3">Cytoplasm</location>
    </subcellularLocation>
</comment>
<comment type="induction">
    <text>By CseB, in response to cell envelope stress.</text>
</comment>
<comment type="similarity">
    <text evidence="3">Belongs to the sigma-70 factor family. ECF subfamily.</text>
</comment>
<proteinExistence type="evidence at protein level"/>
<sequence>MGEVLEFEEYVRTRQDALLRSARRLVPDPVDAQDLLQTALARTYGRWETIEDKRLADAYLRRVMINTRTEWWRARKLEEVPTEQLPESPMDDATEQHADRALLMDVLKVLAPKQRSVVVLRHWEQMSTEETAAALGMSAGTVKSTLHRALARLREELVARDLDARALEREERERCAA</sequence>
<accession>P38133</accession>
<feature type="initiator methionine" description="Removed" evidence="2">
    <location>
        <position position="1"/>
    </location>
</feature>
<feature type="chain" id="PRO_0000094006" description="RNA polymerase sigma-E factor">
    <location>
        <begin position="2"/>
        <end position="177"/>
    </location>
</feature>
<feature type="DNA-binding region" description="H-T-H motif" evidence="1">
    <location>
        <begin position="128"/>
        <end position="147"/>
    </location>
</feature>
<feature type="short sequence motif" description="Polymerase core binding">
    <location>
        <begin position="34"/>
        <end position="47"/>
    </location>
</feature>
<organism>
    <name type="scientific">Streptomyces coelicolor (strain ATCC BAA-471 / A3(2) / M145)</name>
    <dbReference type="NCBI Taxonomy" id="100226"/>
    <lineage>
        <taxon>Bacteria</taxon>
        <taxon>Bacillati</taxon>
        <taxon>Actinomycetota</taxon>
        <taxon>Actinomycetes</taxon>
        <taxon>Kitasatosporales</taxon>
        <taxon>Streptomycetaceae</taxon>
        <taxon>Streptomyces</taxon>
        <taxon>Streptomyces albidoflavus group</taxon>
    </lineage>
</organism>
<name>RPOE_STRCO</name>
<protein>
    <recommendedName>
        <fullName>RNA polymerase sigma-E factor</fullName>
    </recommendedName>
</protein>